<comment type="function">
    <text evidence="1">Possible role in synthesis of the nonaprenyl side chain of plastoquinone or in synthesis of other prenyl chains such as undekaprenyl pyrophosphate.</text>
</comment>
<comment type="cofactor">
    <cofactor evidence="1">
        <name>Mg(2+)</name>
        <dbReference type="ChEBI" id="CHEBI:18420"/>
    </cofactor>
    <text evidence="1">Binds 2 Mg(2+) ions per subunit.</text>
</comment>
<comment type="subcellular location">
    <subcellularLocation>
        <location>Plastid</location>
        <location>Chloroplast</location>
    </subcellularLocation>
</comment>
<comment type="similarity">
    <text evidence="4">Belongs to the FPP/GGPP synthase family.</text>
</comment>
<geneLocation type="chloroplast"/>
<proteinExistence type="inferred from homology"/>
<reference key="1">
    <citation type="journal article" date="1995" name="Plant Mol. Biol. Rep.">
        <title>Complete nucleotide sequence of the Porphyra purpurea chloroplast genome.</title>
        <authorList>
            <person name="Reith M.E."/>
            <person name="Munholland J."/>
        </authorList>
    </citation>
    <scope>NUCLEOTIDE SEQUENCE [LARGE SCALE GENOMIC DNA]</scope>
    <source>
        <strain>Avonport</strain>
    </source>
</reference>
<gene>
    <name type="primary">preA</name>
</gene>
<feature type="chain" id="PRO_0000124000" description="Prenyl transferase">
    <location>
        <begin position="1"/>
        <end position="323"/>
    </location>
</feature>
<feature type="binding site" evidence="2">
    <location>
        <position position="46"/>
    </location>
    <ligand>
        <name>isopentenyl diphosphate</name>
        <dbReference type="ChEBI" id="CHEBI:128769"/>
    </ligand>
</feature>
<feature type="binding site" evidence="2">
    <location>
        <position position="49"/>
    </location>
    <ligand>
        <name>isopentenyl diphosphate</name>
        <dbReference type="ChEBI" id="CHEBI:128769"/>
    </ligand>
</feature>
<feature type="binding site" evidence="3">
    <location>
        <position position="81"/>
    </location>
    <ligand>
        <name>isopentenyl diphosphate</name>
        <dbReference type="ChEBI" id="CHEBI:128769"/>
    </ligand>
</feature>
<feature type="binding site" evidence="2">
    <location>
        <position position="88"/>
    </location>
    <ligand>
        <name>Mg(2+)</name>
        <dbReference type="ChEBI" id="CHEBI:18420"/>
        <label>1</label>
    </ligand>
</feature>
<feature type="binding site" evidence="2">
    <location>
        <position position="88"/>
    </location>
    <ligand>
        <name>Mg(2+)</name>
        <dbReference type="ChEBI" id="CHEBI:18420"/>
        <label>2</label>
    </ligand>
</feature>
<feature type="binding site" evidence="2">
    <location>
        <position position="92"/>
    </location>
    <ligand>
        <name>Mg(2+)</name>
        <dbReference type="ChEBI" id="CHEBI:18420"/>
        <label>1</label>
    </ligand>
</feature>
<feature type="binding site" evidence="2">
    <location>
        <position position="92"/>
    </location>
    <ligand>
        <name>Mg(2+)</name>
        <dbReference type="ChEBI" id="CHEBI:18420"/>
        <label>2</label>
    </ligand>
</feature>
<feature type="binding site" evidence="1">
    <location>
        <position position="97"/>
    </location>
    <ligand>
        <name>an all-trans-polyprenyl diphosphate</name>
        <dbReference type="ChEBI" id="CHEBI:58914"/>
    </ligand>
</feature>
<feature type="binding site" evidence="2">
    <location>
        <position position="98"/>
    </location>
    <ligand>
        <name>isopentenyl diphosphate</name>
        <dbReference type="ChEBI" id="CHEBI:128769"/>
    </ligand>
</feature>
<feature type="binding site" evidence="1">
    <location>
        <position position="174"/>
    </location>
    <ligand>
        <name>an all-trans-polyprenyl diphosphate</name>
        <dbReference type="ChEBI" id="CHEBI:58914"/>
    </ligand>
</feature>
<feature type="binding site" evidence="1">
    <location>
        <position position="175"/>
    </location>
    <ligand>
        <name>an all-trans-polyprenyl diphosphate</name>
        <dbReference type="ChEBI" id="CHEBI:58914"/>
    </ligand>
</feature>
<feature type="binding site" evidence="1">
    <location>
        <position position="212"/>
    </location>
    <ligand>
        <name>an all-trans-polyprenyl diphosphate</name>
        <dbReference type="ChEBI" id="CHEBI:58914"/>
    </ligand>
</feature>
<name>PREA_PORPU</name>
<sequence>MATSSSLFHPIEKELYSVEHNLKSVAGTRHPILYAAAKHLFEAGGKRLRPAIVLLVAKSTSEQQEIKPGQRRLAEITEIIHTASLVHDDVIDECSTRRGEKTVHKLFNTKIAVLAGDFLFAQSSWYLANIGNLEVVKVITKVITDFAEGEIRQGLVHFDPSISIDDYIEKSFYKTASLVAASCRGAAMLNDLNSQMHNDLYLYGKHMGLAFQIMDDVLDIAGSTKSLGKPSGADFMNGNLTAPILFALTQEGKLDQLIQREFSDERDISLALFLIKKSGGITKAKDLAKEQVQAALCCLQFLPKSAPVSSLKELTHFIITRLS</sequence>
<organism>
    <name type="scientific">Porphyra purpurea</name>
    <name type="common">Red seaweed</name>
    <name type="synonym">Ulva purpurea</name>
    <dbReference type="NCBI Taxonomy" id="2787"/>
    <lineage>
        <taxon>Eukaryota</taxon>
        <taxon>Rhodophyta</taxon>
        <taxon>Bangiophyceae</taxon>
        <taxon>Bangiales</taxon>
        <taxon>Bangiaceae</taxon>
        <taxon>Porphyra</taxon>
    </lineage>
</organism>
<accession>P51268</accession>
<dbReference type="EC" id="2.5.1.-"/>
<dbReference type="EMBL" id="U38804">
    <property type="protein sequence ID" value="AAC08154.1"/>
    <property type="molecule type" value="Genomic_DNA"/>
</dbReference>
<dbReference type="PIR" id="S73189">
    <property type="entry name" value="S73189"/>
</dbReference>
<dbReference type="RefSeq" id="NP_053878.1">
    <property type="nucleotide sequence ID" value="NC_000925.1"/>
</dbReference>
<dbReference type="SMR" id="P51268"/>
<dbReference type="GeneID" id="809897"/>
<dbReference type="GO" id="GO:0009507">
    <property type="term" value="C:chloroplast"/>
    <property type="evidence" value="ECO:0007669"/>
    <property type="project" value="UniProtKB-SubCell"/>
</dbReference>
<dbReference type="GO" id="GO:0046872">
    <property type="term" value="F:metal ion binding"/>
    <property type="evidence" value="ECO:0007669"/>
    <property type="project" value="UniProtKB-KW"/>
</dbReference>
<dbReference type="GO" id="GO:0004659">
    <property type="term" value="F:prenyltransferase activity"/>
    <property type="evidence" value="ECO:0007669"/>
    <property type="project" value="InterPro"/>
</dbReference>
<dbReference type="GO" id="GO:0008299">
    <property type="term" value="P:isoprenoid biosynthetic process"/>
    <property type="evidence" value="ECO:0007669"/>
    <property type="project" value="UniProtKB-KW"/>
</dbReference>
<dbReference type="GO" id="GO:0015979">
    <property type="term" value="P:photosynthesis"/>
    <property type="evidence" value="ECO:0007669"/>
    <property type="project" value="UniProtKB-KW"/>
</dbReference>
<dbReference type="GO" id="GO:1901663">
    <property type="term" value="P:quinone biosynthetic process"/>
    <property type="evidence" value="ECO:0007669"/>
    <property type="project" value="UniProtKB-ARBA"/>
</dbReference>
<dbReference type="CDD" id="cd00685">
    <property type="entry name" value="Trans_IPPS_HT"/>
    <property type="match status" value="1"/>
</dbReference>
<dbReference type="Gene3D" id="1.10.600.10">
    <property type="entry name" value="Farnesyl Diphosphate Synthase"/>
    <property type="match status" value="1"/>
</dbReference>
<dbReference type="InterPro" id="IPR008949">
    <property type="entry name" value="Isoprenoid_synthase_dom_sf"/>
</dbReference>
<dbReference type="InterPro" id="IPR000092">
    <property type="entry name" value="Polyprenyl_synt"/>
</dbReference>
<dbReference type="InterPro" id="IPR033749">
    <property type="entry name" value="Polyprenyl_synt_CS"/>
</dbReference>
<dbReference type="NCBIfam" id="TIGR02749">
    <property type="entry name" value="prenyl_cyano"/>
    <property type="match status" value="1"/>
</dbReference>
<dbReference type="PANTHER" id="PTHR12001:SF69">
    <property type="entry name" value="ALL TRANS-POLYPRENYL-DIPHOSPHATE SYNTHASE PDSS1"/>
    <property type="match status" value="1"/>
</dbReference>
<dbReference type="PANTHER" id="PTHR12001">
    <property type="entry name" value="GERANYLGERANYL PYROPHOSPHATE SYNTHASE"/>
    <property type="match status" value="1"/>
</dbReference>
<dbReference type="Pfam" id="PF00348">
    <property type="entry name" value="polyprenyl_synt"/>
    <property type="match status" value="1"/>
</dbReference>
<dbReference type="SFLD" id="SFLDS00005">
    <property type="entry name" value="Isoprenoid_Synthase_Type_I"/>
    <property type="match status" value="1"/>
</dbReference>
<dbReference type="SUPFAM" id="SSF48576">
    <property type="entry name" value="Terpenoid synthases"/>
    <property type="match status" value="1"/>
</dbReference>
<dbReference type="PROSITE" id="PS00723">
    <property type="entry name" value="POLYPRENYL_SYNTHASE_1"/>
    <property type="match status" value="1"/>
</dbReference>
<dbReference type="PROSITE" id="PS00444">
    <property type="entry name" value="POLYPRENYL_SYNTHASE_2"/>
    <property type="match status" value="1"/>
</dbReference>
<protein>
    <recommendedName>
        <fullName>Prenyl transferase</fullName>
        <ecNumber>2.5.1.-</ecNumber>
    </recommendedName>
</protein>
<keyword id="KW-0150">Chloroplast</keyword>
<keyword id="KW-0414">Isoprene biosynthesis</keyword>
<keyword id="KW-0460">Magnesium</keyword>
<keyword id="KW-0479">Metal-binding</keyword>
<keyword id="KW-0602">Photosynthesis</keyword>
<keyword id="KW-0934">Plastid</keyword>
<keyword id="KW-0808">Transferase</keyword>
<evidence type="ECO:0000250" key="1"/>
<evidence type="ECO:0000250" key="2">
    <source>
        <dbReference type="UniProtKB" id="P14324"/>
    </source>
</evidence>
<evidence type="ECO:0000250" key="3">
    <source>
        <dbReference type="UniProtKB" id="Q12051"/>
    </source>
</evidence>
<evidence type="ECO:0000305" key="4"/>